<sequence length="291" mass="32659">MKKFVIFTDSAADLPKSMVKDLDINYLGLICNIDNTEYIDNIDSELTPKAFYNKLREGIMPSTSQVNSFRFVEAFEEYVKQGISILYLAFSSALSGTYNSSLIAREELLEKYPDADIKIVDTRAACLGQGLLVYYAAQMKKDGKSIDEIYSWVEENKNKLCHYFTVDSLDHLKRGGRISSTAAAIGSLLSIKPMLYVNDAGELHNFAKAKGRKKSLKMLFQELEKRIVNPNEQTIFIAHSDCVEDAETLAEMIREKYPVKDILIDYIGIVIGSHTGIGTLAVFFLGDTKEP</sequence>
<name>Y026_CLOPE</name>
<proteinExistence type="inferred from homology"/>
<keyword id="KW-0446">Lipid-binding</keyword>
<keyword id="KW-1185">Reference proteome</keyword>
<accession>Q8XPD7</accession>
<gene>
    <name type="ordered locus">CPE0026</name>
</gene>
<dbReference type="EMBL" id="BA000016">
    <property type="protein sequence ID" value="BAB79732.1"/>
    <property type="molecule type" value="Genomic_DNA"/>
</dbReference>
<dbReference type="RefSeq" id="WP_011009577.1">
    <property type="nucleotide sequence ID" value="NC_003366.1"/>
</dbReference>
<dbReference type="SMR" id="Q8XPD7"/>
<dbReference type="STRING" id="195102.gene:10489254"/>
<dbReference type="KEGG" id="cpe:CPE0026"/>
<dbReference type="HOGENOM" id="CLU_048251_4_1_9"/>
<dbReference type="Proteomes" id="UP000000818">
    <property type="component" value="Chromosome"/>
</dbReference>
<dbReference type="GO" id="GO:0008289">
    <property type="term" value="F:lipid binding"/>
    <property type="evidence" value="ECO:0007669"/>
    <property type="project" value="UniProtKB-KW"/>
</dbReference>
<dbReference type="Gene3D" id="3.30.1180.10">
    <property type="match status" value="1"/>
</dbReference>
<dbReference type="Gene3D" id="2.20.28.50">
    <property type="entry name" value="degv family protein"/>
    <property type="match status" value="1"/>
</dbReference>
<dbReference type="Gene3D" id="3.40.50.10440">
    <property type="entry name" value="Dihydroxyacetone kinase, domain 1"/>
    <property type="match status" value="1"/>
</dbReference>
<dbReference type="InterPro" id="IPR003797">
    <property type="entry name" value="DegV"/>
</dbReference>
<dbReference type="InterPro" id="IPR043168">
    <property type="entry name" value="DegV_C"/>
</dbReference>
<dbReference type="InterPro" id="IPR050270">
    <property type="entry name" value="DegV_domain_contain"/>
</dbReference>
<dbReference type="NCBIfam" id="TIGR00762">
    <property type="entry name" value="DegV"/>
    <property type="match status" value="1"/>
</dbReference>
<dbReference type="PANTHER" id="PTHR33434">
    <property type="entry name" value="DEGV DOMAIN-CONTAINING PROTEIN DR_1986-RELATED"/>
    <property type="match status" value="1"/>
</dbReference>
<dbReference type="PANTHER" id="PTHR33434:SF3">
    <property type="entry name" value="DEGV DOMAIN-CONTAINING PROTEIN YITS"/>
    <property type="match status" value="1"/>
</dbReference>
<dbReference type="Pfam" id="PF02645">
    <property type="entry name" value="DegV"/>
    <property type="match status" value="1"/>
</dbReference>
<dbReference type="SUPFAM" id="SSF82549">
    <property type="entry name" value="DAK1/DegV-like"/>
    <property type="match status" value="1"/>
</dbReference>
<dbReference type="PROSITE" id="PS51482">
    <property type="entry name" value="DEGV"/>
    <property type="match status" value="1"/>
</dbReference>
<comment type="function">
    <text evidence="1">May bind long-chain fatty acids, such as palmitate, and may play a role in lipid transport or fatty acid metabolism.</text>
</comment>
<evidence type="ECO:0000250" key="1"/>
<evidence type="ECO:0000250" key="2">
    <source>
        <dbReference type="UniProtKB" id="Q9X1H9"/>
    </source>
</evidence>
<evidence type="ECO:0000255" key="3">
    <source>
        <dbReference type="PROSITE-ProRule" id="PRU00815"/>
    </source>
</evidence>
<feature type="chain" id="PRO_0000209757" description="DegV domain-containing protein CPE0026">
    <location>
        <begin position="1"/>
        <end position="291"/>
    </location>
</feature>
<feature type="domain" description="DegV" evidence="3">
    <location>
        <begin position="4"/>
        <end position="286"/>
    </location>
</feature>
<feature type="binding site" evidence="2">
    <location>
        <position position="63"/>
    </location>
    <ligand>
        <name>hexadecanoate</name>
        <dbReference type="ChEBI" id="CHEBI:7896"/>
    </ligand>
</feature>
<feature type="binding site" evidence="2">
    <location>
        <position position="95"/>
    </location>
    <ligand>
        <name>hexadecanoate</name>
        <dbReference type="ChEBI" id="CHEBI:7896"/>
    </ligand>
</feature>
<protein>
    <recommendedName>
        <fullName>DegV domain-containing protein CPE0026</fullName>
    </recommendedName>
</protein>
<reference key="1">
    <citation type="journal article" date="2002" name="Proc. Natl. Acad. Sci. U.S.A.">
        <title>Complete genome sequence of Clostridium perfringens, an anaerobic flesh-eater.</title>
        <authorList>
            <person name="Shimizu T."/>
            <person name="Ohtani K."/>
            <person name="Hirakawa H."/>
            <person name="Ohshima K."/>
            <person name="Yamashita A."/>
            <person name="Shiba T."/>
            <person name="Ogasawara N."/>
            <person name="Hattori M."/>
            <person name="Kuhara S."/>
            <person name="Hayashi H."/>
        </authorList>
    </citation>
    <scope>NUCLEOTIDE SEQUENCE [LARGE SCALE GENOMIC DNA]</scope>
    <source>
        <strain>13 / Type A</strain>
    </source>
</reference>
<organism>
    <name type="scientific">Clostridium perfringens (strain 13 / Type A)</name>
    <dbReference type="NCBI Taxonomy" id="195102"/>
    <lineage>
        <taxon>Bacteria</taxon>
        <taxon>Bacillati</taxon>
        <taxon>Bacillota</taxon>
        <taxon>Clostridia</taxon>
        <taxon>Eubacteriales</taxon>
        <taxon>Clostridiaceae</taxon>
        <taxon>Clostridium</taxon>
    </lineage>
</organism>